<proteinExistence type="evidence at protein level"/>
<organism>
    <name type="scientific">Mus musculus</name>
    <name type="common">Mouse</name>
    <dbReference type="NCBI Taxonomy" id="10090"/>
    <lineage>
        <taxon>Eukaryota</taxon>
        <taxon>Metazoa</taxon>
        <taxon>Chordata</taxon>
        <taxon>Craniata</taxon>
        <taxon>Vertebrata</taxon>
        <taxon>Euteleostomi</taxon>
        <taxon>Mammalia</taxon>
        <taxon>Eutheria</taxon>
        <taxon>Euarchontoglires</taxon>
        <taxon>Glires</taxon>
        <taxon>Rodentia</taxon>
        <taxon>Myomorpha</taxon>
        <taxon>Muroidea</taxon>
        <taxon>Muridae</taxon>
        <taxon>Murinae</taxon>
        <taxon>Mus</taxon>
        <taxon>Mus</taxon>
    </lineage>
</organism>
<feature type="chain" id="PRO_0000318167" description="Probable small intestine urate exporter">
    <location>
        <begin position="1"/>
        <end position="492"/>
    </location>
</feature>
<feature type="transmembrane region" description="Helical" evidence="2">
    <location>
        <begin position="112"/>
        <end position="132"/>
    </location>
</feature>
<feature type="transmembrane region" description="Helical" evidence="2">
    <location>
        <begin position="134"/>
        <end position="154"/>
    </location>
</feature>
<feature type="transmembrane region" description="Helical" evidence="2">
    <location>
        <begin position="156"/>
        <end position="176"/>
    </location>
</feature>
<feature type="transmembrane region" description="Helical" evidence="2">
    <location>
        <begin position="198"/>
        <end position="218"/>
    </location>
</feature>
<feature type="transmembrane region" description="Helical" evidence="2">
    <location>
        <begin position="225"/>
        <end position="245"/>
    </location>
</feature>
<feature type="transmembrane region" description="Helical" evidence="2">
    <location>
        <begin position="287"/>
        <end position="307"/>
    </location>
</feature>
<feature type="transmembrane region" description="Helical" evidence="2">
    <location>
        <begin position="327"/>
        <end position="347"/>
    </location>
</feature>
<feature type="transmembrane region" description="Helical" evidence="2">
    <location>
        <begin position="363"/>
        <end position="383"/>
    </location>
</feature>
<feature type="transmembrane region" description="Helical" evidence="2">
    <location>
        <begin position="393"/>
        <end position="413"/>
    </location>
</feature>
<feature type="transmembrane region" description="Helical" evidence="2">
    <location>
        <begin position="426"/>
        <end position="446"/>
    </location>
</feature>
<feature type="transmembrane region" description="Helical" evidence="2">
    <location>
        <begin position="456"/>
        <end position="476"/>
    </location>
</feature>
<feature type="region of interest" description="Disordered" evidence="3">
    <location>
        <begin position="1"/>
        <end position="20"/>
    </location>
</feature>
<feature type="glycosylation site" description="N-linked (GlcNAc...) asparagine" evidence="2">
    <location>
        <position position="18"/>
    </location>
</feature>
<feature type="glycosylation site" description="N-linked (GlcNAc...) asparagine" evidence="2">
    <location>
        <position position="44"/>
    </location>
</feature>
<feature type="glycosylation site" description="N-linked (GlcNAc...) asparagine" evidence="2">
    <location>
        <position position="53"/>
    </location>
</feature>
<feature type="glycosylation site" description="N-linked (GlcNAc...) asparagine" evidence="2">
    <location>
        <position position="63"/>
    </location>
</feature>
<feature type="glycosylation site" description="N-linked (GlcNAc...) asparagine" evidence="2">
    <location>
        <position position="72"/>
    </location>
</feature>
<feature type="glycosylation site" description="N-linked (GlcNAc...) asparagine" evidence="2">
    <location>
        <position position="87"/>
    </location>
</feature>
<comment type="function">
    <text evidence="1 4">Acts as a membrane potential-dependent organic anion transporter, the transport requires a low concentration of chloride ions (PubMed:22460716). Mediates chloride-dependent transport of urate (PubMed:22460716). Mediates sodium-independent high affinity transport of thyroid hormones including L-thyroxine (T4) and 3,3',5-triiodo-L-thyronine (T3) (By similarity). Can actively transport inorganic phosphate into cells via Na(+) cotransport (By similarity).</text>
</comment>
<comment type="catalytic activity">
    <reaction evidence="1">
        <text>3 Na(+)(out) + phosphate(out) = 3 Na(+)(in) + phosphate(in)</text>
        <dbReference type="Rhea" id="RHEA:71255"/>
        <dbReference type="ChEBI" id="CHEBI:29101"/>
        <dbReference type="ChEBI" id="CHEBI:43474"/>
    </reaction>
</comment>
<comment type="catalytic activity">
    <reaction evidence="4">
        <text>urate(out) + n chloride(in) = urate(in) + n chloride(out)</text>
        <dbReference type="Rhea" id="RHEA:72319"/>
        <dbReference type="ChEBI" id="CHEBI:17775"/>
        <dbReference type="ChEBI" id="CHEBI:17996"/>
    </reaction>
</comment>
<comment type="catalytic activity">
    <reaction evidence="1">
        <text>L-thyroxine(out) = L-thyroxine(in)</text>
        <dbReference type="Rhea" id="RHEA:71819"/>
        <dbReference type="ChEBI" id="CHEBI:58448"/>
    </reaction>
</comment>
<comment type="catalytic activity">
    <reaction evidence="1">
        <text>3,3',5-triiodo-L-thyronine(out) = 3,3',5-triiodo-L-thyronine(in)</text>
        <dbReference type="Rhea" id="RHEA:71811"/>
        <dbReference type="ChEBI" id="CHEBI:533015"/>
    </reaction>
</comment>
<comment type="subcellular location">
    <subcellularLocation>
        <location evidence="4">Apical cell membrane</location>
        <topology evidence="2">Multi-pass membrane protein</topology>
    </subcellularLocation>
    <text evidence="4">Apical in the intestinal brush border.</text>
</comment>
<comment type="tissue specificity">
    <text evidence="4">Expressed in the small intestine (at protein level).</text>
</comment>
<comment type="similarity">
    <text evidence="5">Belongs to the major facilitator superfamily. Sodium/anion cotransporter family.</text>
</comment>
<comment type="sequence caution" evidence="5">
    <conflict type="erroneous gene model prediction">
        <sequence resource="EMBL-CDS" id="CAI35970"/>
    </conflict>
</comment>
<accession>Q5NCM1</accession>
<accession>B9EJP0</accession>
<protein>
    <recommendedName>
        <fullName>Probable small intestine urate exporter</fullName>
    </recommendedName>
    <alternativeName>
        <fullName>Solute carrier family 17 member 4</fullName>
    </alternativeName>
</protein>
<keyword id="KW-1003">Cell membrane</keyword>
<keyword id="KW-0325">Glycoprotein</keyword>
<keyword id="KW-0406">Ion transport</keyword>
<keyword id="KW-0472">Membrane</keyword>
<keyword id="KW-1185">Reference proteome</keyword>
<keyword id="KW-0915">Sodium</keyword>
<keyword id="KW-0739">Sodium transport</keyword>
<keyword id="KW-0769">Symport</keyword>
<keyword id="KW-0812">Transmembrane</keyword>
<keyword id="KW-1133">Transmembrane helix</keyword>
<keyword id="KW-0813">Transport</keyword>
<gene>
    <name type="primary">Slc17a4</name>
</gene>
<reference key="1">
    <citation type="journal article" date="2009" name="PLoS Biol.">
        <title>Lineage-specific biology revealed by a finished genome assembly of the mouse.</title>
        <authorList>
            <person name="Church D.M."/>
            <person name="Goodstadt L."/>
            <person name="Hillier L.W."/>
            <person name="Zody M.C."/>
            <person name="Goldstein S."/>
            <person name="She X."/>
            <person name="Bult C.J."/>
            <person name="Agarwala R."/>
            <person name="Cherry J.L."/>
            <person name="DiCuccio M."/>
            <person name="Hlavina W."/>
            <person name="Kapustin Y."/>
            <person name="Meric P."/>
            <person name="Maglott D."/>
            <person name="Birtle Z."/>
            <person name="Marques A.C."/>
            <person name="Graves T."/>
            <person name="Zhou S."/>
            <person name="Teague B."/>
            <person name="Potamousis K."/>
            <person name="Churas C."/>
            <person name="Place M."/>
            <person name="Herschleb J."/>
            <person name="Runnheim R."/>
            <person name="Forrest D."/>
            <person name="Amos-Landgraf J."/>
            <person name="Schwartz D.C."/>
            <person name="Cheng Z."/>
            <person name="Lindblad-Toh K."/>
            <person name="Eichler E.E."/>
            <person name="Ponting C.P."/>
        </authorList>
    </citation>
    <scope>NUCLEOTIDE SEQUENCE [LARGE SCALE GENOMIC DNA]</scope>
    <source>
        <strain>C57BL/6J</strain>
    </source>
</reference>
<reference key="2">
    <citation type="journal article" date="2004" name="Genome Res.">
        <title>The status, quality, and expansion of the NIH full-length cDNA project: the Mammalian Gene Collection (MGC).</title>
        <authorList>
            <consortium name="The MGC Project Team"/>
        </authorList>
    </citation>
    <scope>NUCLEOTIDE SEQUENCE [LARGE SCALE MRNA]</scope>
    <source>
        <tissue>Brain</tissue>
    </source>
</reference>
<reference key="3">
    <citation type="journal article" date="2012" name="Am. J. Physiol.">
        <title>A Na+-phosphate cotransporter homologue (SLC17A4 protein) is an intestinal organic anion exporter.</title>
        <authorList>
            <person name="Togawa N."/>
            <person name="Miyaji T."/>
            <person name="Izawa S."/>
            <person name="Omote H."/>
            <person name="Moriyama Y."/>
        </authorList>
    </citation>
    <scope>FUNCTION</scope>
    <scope>SUBCELLULAR LOCATION</scope>
    <scope>TISSUE SPECIFICITY</scope>
    <scope>TRANSPORTER ACTIVITY</scope>
</reference>
<name>S17A4_MOUSE</name>
<dbReference type="EMBL" id="AL606464">
    <property type="protein sequence ID" value="CAI35970.1"/>
    <property type="status" value="ALT_SEQ"/>
    <property type="molecule type" value="Genomic_DNA"/>
</dbReference>
<dbReference type="EMBL" id="BC147415">
    <property type="protein sequence ID" value="AAI47416.1"/>
    <property type="molecule type" value="mRNA"/>
</dbReference>
<dbReference type="EMBL" id="BC147416">
    <property type="protein sequence ID" value="AAI47417.1"/>
    <property type="molecule type" value="mRNA"/>
</dbReference>
<dbReference type="CCDS" id="CCDS49221.1"/>
<dbReference type="RefSeq" id="NP_795990.2">
    <property type="nucleotide sequence ID" value="NM_177016.3"/>
</dbReference>
<dbReference type="SMR" id="Q5NCM1"/>
<dbReference type="FunCoup" id="Q5NCM1">
    <property type="interactions" value="18"/>
</dbReference>
<dbReference type="STRING" id="10090.ENSMUSP00000021769"/>
<dbReference type="GlyCosmos" id="Q5NCM1">
    <property type="glycosylation" value="6 sites, No reported glycans"/>
</dbReference>
<dbReference type="GlyGen" id="Q5NCM1">
    <property type="glycosylation" value="7 sites"/>
</dbReference>
<dbReference type="iPTMnet" id="Q5NCM1"/>
<dbReference type="PhosphoSitePlus" id="Q5NCM1"/>
<dbReference type="PaxDb" id="10090-ENSMUSP00000021769"/>
<dbReference type="ProteomicsDB" id="260973"/>
<dbReference type="Antibodypedia" id="10729">
    <property type="antibodies" value="65 antibodies from 19 providers"/>
</dbReference>
<dbReference type="DNASU" id="319848"/>
<dbReference type="Ensembl" id="ENSMUST00000021769.16">
    <property type="protein sequence ID" value="ENSMUSP00000021769.10"/>
    <property type="gene ID" value="ENSMUSG00000021336.18"/>
</dbReference>
<dbReference type="GeneID" id="319848"/>
<dbReference type="KEGG" id="mmu:319848"/>
<dbReference type="UCSC" id="uc007pvh.1">
    <property type="organism name" value="mouse"/>
</dbReference>
<dbReference type="AGR" id="MGI:2442850"/>
<dbReference type="CTD" id="10050"/>
<dbReference type="MGI" id="MGI:2442850">
    <property type="gene designation" value="Slc17a4"/>
</dbReference>
<dbReference type="VEuPathDB" id="HostDB:ENSMUSG00000021336"/>
<dbReference type="eggNOG" id="KOG2532">
    <property type="taxonomic scope" value="Eukaryota"/>
</dbReference>
<dbReference type="GeneTree" id="ENSGT00940000160894"/>
<dbReference type="HOGENOM" id="CLU_001265_5_0_1"/>
<dbReference type="InParanoid" id="Q5NCM1"/>
<dbReference type="OMA" id="IGWPYIF"/>
<dbReference type="OrthoDB" id="2985014at2759"/>
<dbReference type="PhylomeDB" id="Q5NCM1"/>
<dbReference type="TreeFam" id="TF313535"/>
<dbReference type="BioGRID-ORCS" id="319848">
    <property type="hits" value="3 hits in 78 CRISPR screens"/>
</dbReference>
<dbReference type="PRO" id="PR:Q5NCM1"/>
<dbReference type="Proteomes" id="UP000000589">
    <property type="component" value="Chromosome 13"/>
</dbReference>
<dbReference type="RNAct" id="Q5NCM1">
    <property type="molecule type" value="protein"/>
</dbReference>
<dbReference type="Bgee" id="ENSMUSG00000021336">
    <property type="expression patterns" value="Expressed in jejunum and 27 other cell types or tissues"/>
</dbReference>
<dbReference type="ExpressionAtlas" id="Q5NCM1">
    <property type="expression patterns" value="baseline and differential"/>
</dbReference>
<dbReference type="GO" id="GO:0016324">
    <property type="term" value="C:apical plasma membrane"/>
    <property type="evidence" value="ECO:0000314"/>
    <property type="project" value="UniProtKB"/>
</dbReference>
<dbReference type="GO" id="GO:0031526">
    <property type="term" value="C:brush border membrane"/>
    <property type="evidence" value="ECO:0007669"/>
    <property type="project" value="Ensembl"/>
</dbReference>
<dbReference type="GO" id="GO:0015293">
    <property type="term" value="F:symporter activity"/>
    <property type="evidence" value="ECO:0007669"/>
    <property type="project" value="UniProtKB-KW"/>
</dbReference>
<dbReference type="GO" id="GO:0015349">
    <property type="term" value="F:thyroid hormone transmembrane transporter activity"/>
    <property type="evidence" value="ECO:0000250"/>
    <property type="project" value="UniProtKB"/>
</dbReference>
<dbReference type="GO" id="GO:0015143">
    <property type="term" value="F:urate transmembrane transporter activity"/>
    <property type="evidence" value="ECO:0000314"/>
    <property type="project" value="UniProtKB"/>
</dbReference>
<dbReference type="GO" id="GO:0006814">
    <property type="term" value="P:sodium ion transport"/>
    <property type="evidence" value="ECO:0007669"/>
    <property type="project" value="UniProtKB-KW"/>
</dbReference>
<dbReference type="GO" id="GO:0044341">
    <property type="term" value="P:sodium-dependent phosphate transport"/>
    <property type="evidence" value="ECO:0007669"/>
    <property type="project" value="Ensembl"/>
</dbReference>
<dbReference type="CDD" id="cd17318">
    <property type="entry name" value="MFS_SLC17"/>
    <property type="match status" value="1"/>
</dbReference>
<dbReference type="FunFam" id="1.20.1250.20:FF:000003">
    <property type="entry name" value="Solute carrier family 17 member 3"/>
    <property type="match status" value="1"/>
</dbReference>
<dbReference type="FunFam" id="1.20.1250.20:FF:000060">
    <property type="entry name" value="Solute carrier family 17 member 3"/>
    <property type="match status" value="1"/>
</dbReference>
<dbReference type="Gene3D" id="1.20.1250.20">
    <property type="entry name" value="MFS general substrate transporter like domains"/>
    <property type="match status" value="2"/>
</dbReference>
<dbReference type="InterPro" id="IPR011701">
    <property type="entry name" value="MFS"/>
</dbReference>
<dbReference type="InterPro" id="IPR020846">
    <property type="entry name" value="MFS_dom"/>
</dbReference>
<dbReference type="InterPro" id="IPR050382">
    <property type="entry name" value="MFS_Na/Anion_cotransporter"/>
</dbReference>
<dbReference type="InterPro" id="IPR036259">
    <property type="entry name" value="MFS_trans_sf"/>
</dbReference>
<dbReference type="PANTHER" id="PTHR11662:SF284">
    <property type="entry name" value="SMALL INTESTINE URATE EXPORTER-RELATED"/>
    <property type="match status" value="1"/>
</dbReference>
<dbReference type="PANTHER" id="PTHR11662">
    <property type="entry name" value="SOLUTE CARRIER FAMILY 17"/>
    <property type="match status" value="1"/>
</dbReference>
<dbReference type="Pfam" id="PF07690">
    <property type="entry name" value="MFS_1"/>
    <property type="match status" value="1"/>
</dbReference>
<dbReference type="SUPFAM" id="SSF103473">
    <property type="entry name" value="MFS general substrate transporter"/>
    <property type="match status" value="1"/>
</dbReference>
<dbReference type="PROSITE" id="PS50850">
    <property type="entry name" value="MFS"/>
    <property type="match status" value="1"/>
</dbReference>
<evidence type="ECO:0000250" key="1">
    <source>
        <dbReference type="UniProtKB" id="Q9Y2C5"/>
    </source>
</evidence>
<evidence type="ECO:0000255" key="2"/>
<evidence type="ECO:0000256" key="3">
    <source>
        <dbReference type="SAM" id="MobiDB-lite"/>
    </source>
</evidence>
<evidence type="ECO:0000269" key="4">
    <source>
    </source>
</evidence>
<evidence type="ECO:0000305" key="5"/>
<sequence length="492" mass="53668">MSTGADLKAREGDIPSDNMTQEQSFKKGFCSLRHGLAFILHLCNFSIYTQQMNLSFAITAMVNTTVASSQLNASTERPPTNSQDVWNETLQESKAPVYDWTPEIQGILLSSLSYGSFIAPIPTGYVAGVFGAKYVVGLGLLISSVLTLFIPLAADAGVALLIVLRVIQGMAQVMVLTGQYSLWAKWAPPQERSQLITIAASGSMLGTFLVLIAGGLICQALGWPYIFYIFGGIGCACCLLWFPLVYDDPQNHPFISTGERRYITCSLAQEDCSLGWSLPIKAMVKSLPLWAIVVSYFCEYWLLSTVMAYTPTYISSVLQANLRDSGILSALPFMFGCVCIILGGLLADFLLSRKILRLVTIRKLFTAVGVLASSGILLPLPWVRSSRSTTMAFLVLSSVFASLCDSGALINFLDIAPRYAGFLKGLLQVFSYLAGGIAPTVAGFFISQDSEFGWRNVFFLAAAIDVVGLLFYLIFSRAEVQDWAKEPTFTHL</sequence>